<organism>
    <name type="scientific">Mus musculus</name>
    <name type="common">Mouse</name>
    <dbReference type="NCBI Taxonomy" id="10090"/>
    <lineage>
        <taxon>Eukaryota</taxon>
        <taxon>Metazoa</taxon>
        <taxon>Chordata</taxon>
        <taxon>Craniata</taxon>
        <taxon>Vertebrata</taxon>
        <taxon>Euteleostomi</taxon>
        <taxon>Mammalia</taxon>
        <taxon>Eutheria</taxon>
        <taxon>Euarchontoglires</taxon>
        <taxon>Glires</taxon>
        <taxon>Rodentia</taxon>
        <taxon>Myomorpha</taxon>
        <taxon>Muroidea</taxon>
        <taxon>Muridae</taxon>
        <taxon>Murinae</taxon>
        <taxon>Mus</taxon>
        <taxon>Mus</taxon>
    </lineage>
</organism>
<sequence length="285" mass="33329">MMSDYNWFEGIPFPAISYQREILEDIRNKFVVKEEDLLILTYPKSGTNWLNEIVCLIQTKGDPKWIQTVPIWDRSPWIETEIGYSAIINKEGPRLITSHLPIHLFSKSFFSSKAKAIYLMRNPRDILVSGYFFWGNTNLVKNPGSLGTYFEWFLQGNVLFGSWFEHVRGWLSMREWDNFLVLYYEDMKKDTKGTIKKICDFLGKNLGPDELDLVLKYSSFQAMKENNMSNYSLIKEDRVTNGLKLMRKGTTGDWKNHFTVAQAEAFDKVFQEKMAGFPPGMFPWE</sequence>
<name>ST2A2_MOUSE</name>
<accession>P50236</accession>
<accession>Q05A88</accession>
<feature type="chain" id="PRO_0000085148" description="Sulfotransferase 2A2">
    <location>
        <begin position="1"/>
        <end position="285"/>
    </location>
</feature>
<feature type="active site" description="Proton acceptor" evidence="2">
    <location>
        <position position="99"/>
    </location>
</feature>
<feature type="binding site" evidence="2">
    <location>
        <position position="44"/>
    </location>
    <ligand>
        <name>3'-phosphoadenylyl sulfate</name>
        <dbReference type="ChEBI" id="CHEBI:58339"/>
    </ligand>
</feature>
<feature type="binding site" evidence="2">
    <location>
        <position position="45"/>
    </location>
    <ligand>
        <name>3'-phosphoadenylyl sulfate</name>
        <dbReference type="ChEBI" id="CHEBI:58339"/>
    </ligand>
</feature>
<feature type="binding site" evidence="2">
    <location>
        <position position="46"/>
    </location>
    <ligand>
        <name>3'-phosphoadenylyl sulfate</name>
        <dbReference type="ChEBI" id="CHEBI:58339"/>
    </ligand>
</feature>
<feature type="binding site" evidence="2">
    <location>
        <position position="47"/>
    </location>
    <ligand>
        <name>3'-phosphoadenylyl sulfate</name>
        <dbReference type="ChEBI" id="CHEBI:58339"/>
    </ligand>
</feature>
<feature type="binding site" evidence="2">
    <location>
        <position position="48"/>
    </location>
    <ligand>
        <name>3'-phosphoadenylyl sulfate</name>
        <dbReference type="ChEBI" id="CHEBI:58339"/>
    </ligand>
</feature>
<feature type="binding site" evidence="2">
    <location>
        <position position="49"/>
    </location>
    <ligand>
        <name>3'-phosphoadenylyl sulfate</name>
        <dbReference type="ChEBI" id="CHEBI:58339"/>
    </ligand>
</feature>
<feature type="binding site" evidence="2">
    <location>
        <position position="121"/>
    </location>
    <ligand>
        <name>3'-phosphoadenylyl sulfate</name>
        <dbReference type="ChEBI" id="CHEBI:58339"/>
    </ligand>
</feature>
<feature type="binding site" evidence="2">
    <location>
        <position position="129"/>
    </location>
    <ligand>
        <name>3'-phosphoadenylyl sulfate</name>
        <dbReference type="ChEBI" id="CHEBI:58339"/>
    </ligand>
</feature>
<feature type="binding site" evidence="2">
    <location>
        <position position="184"/>
    </location>
    <ligand>
        <name>3'-phosphoadenylyl sulfate</name>
        <dbReference type="ChEBI" id="CHEBI:58339"/>
    </ligand>
</feature>
<feature type="binding site" evidence="2">
    <location>
        <position position="218"/>
    </location>
    <ligand>
        <name>3'-phosphoadenylyl sulfate</name>
        <dbReference type="ChEBI" id="CHEBI:58339"/>
    </ligand>
</feature>
<feature type="binding site" evidence="2">
    <location>
        <position position="223"/>
    </location>
    <ligand>
        <name>3'-phosphoadenylyl sulfate</name>
        <dbReference type="ChEBI" id="CHEBI:58339"/>
    </ligand>
</feature>
<feature type="binding site" evidence="2">
    <location>
        <position position="247"/>
    </location>
    <ligand>
        <name>3'-phosphoadenylyl sulfate</name>
        <dbReference type="ChEBI" id="CHEBI:58339"/>
    </ligand>
</feature>
<feature type="binding site" evidence="2">
    <location>
        <position position="248"/>
    </location>
    <ligand>
        <name>3'-phosphoadenylyl sulfate</name>
        <dbReference type="ChEBI" id="CHEBI:58339"/>
    </ligand>
</feature>
<feature type="binding site" evidence="2">
    <location>
        <position position="249"/>
    </location>
    <ligand>
        <name>3'-phosphoadenylyl sulfate</name>
        <dbReference type="ChEBI" id="CHEBI:58339"/>
    </ligand>
</feature>
<feature type="sequence conflict" description="In Ref. 2; AAI25366/AAI25368." evidence="5" ref="2">
    <original>S</original>
    <variation>P</variation>
    <location>
        <position position="85"/>
    </location>
</feature>
<dbReference type="EC" id="2.8.2.2" evidence="3"/>
<dbReference type="EMBL" id="L27121">
    <property type="protein sequence ID" value="AAA40145.1"/>
    <property type="molecule type" value="mRNA"/>
</dbReference>
<dbReference type="EMBL" id="BC125365">
    <property type="protein sequence ID" value="AAI25366.1"/>
    <property type="molecule type" value="mRNA"/>
</dbReference>
<dbReference type="EMBL" id="BC125367">
    <property type="protein sequence ID" value="AAI25368.1"/>
    <property type="molecule type" value="mRNA"/>
</dbReference>
<dbReference type="PIR" id="T10086">
    <property type="entry name" value="T10086"/>
</dbReference>
<dbReference type="SMR" id="P50236"/>
<dbReference type="FunCoup" id="P50236">
    <property type="interactions" value="314"/>
</dbReference>
<dbReference type="iPTMnet" id="P50236"/>
<dbReference type="PhosphoSitePlus" id="P50236"/>
<dbReference type="jPOST" id="P50236"/>
<dbReference type="ProteomicsDB" id="258633"/>
<dbReference type="AGR" id="MGI:107550"/>
<dbReference type="MGI" id="MGI:107550">
    <property type="gene designation" value="Sult2a2"/>
</dbReference>
<dbReference type="InParanoid" id="P50236"/>
<dbReference type="OrthoDB" id="205623at2759"/>
<dbReference type="Reactome" id="R-MMU-156584">
    <property type="pathway name" value="Cytosolic sulfonation of small molecules"/>
</dbReference>
<dbReference type="Reactome" id="R-MMU-9753281">
    <property type="pathway name" value="Paracetamol ADME"/>
</dbReference>
<dbReference type="PRO" id="PR:P50236"/>
<dbReference type="Proteomes" id="UP000000589">
    <property type="component" value="Unplaced"/>
</dbReference>
<dbReference type="RNAct" id="P50236">
    <property type="molecule type" value="protein"/>
</dbReference>
<dbReference type="GO" id="GO:0005737">
    <property type="term" value="C:cytoplasm"/>
    <property type="evidence" value="ECO:0007669"/>
    <property type="project" value="UniProtKB-SubCell"/>
</dbReference>
<dbReference type="GO" id="GO:0004027">
    <property type="term" value="F:alcohol sulfotransferase activity"/>
    <property type="evidence" value="ECO:0007669"/>
    <property type="project" value="RHEA"/>
</dbReference>
<dbReference type="GO" id="GO:0047704">
    <property type="term" value="F:bile-salt sulfotransferase activity"/>
    <property type="evidence" value="ECO:0007669"/>
    <property type="project" value="UniProtKB-EC"/>
</dbReference>
<dbReference type="GO" id="GO:0008202">
    <property type="term" value="P:steroid metabolic process"/>
    <property type="evidence" value="ECO:0007669"/>
    <property type="project" value="UniProtKB-KW"/>
</dbReference>
<dbReference type="FunFam" id="3.40.50.300:FF:000433">
    <property type="entry name" value="Estrogen sulfotransferase"/>
    <property type="match status" value="1"/>
</dbReference>
<dbReference type="Gene3D" id="3.40.50.300">
    <property type="entry name" value="P-loop containing nucleotide triphosphate hydrolases"/>
    <property type="match status" value="1"/>
</dbReference>
<dbReference type="InterPro" id="IPR027417">
    <property type="entry name" value="P-loop_NTPase"/>
</dbReference>
<dbReference type="InterPro" id="IPR000863">
    <property type="entry name" value="Sulfotransferase_dom"/>
</dbReference>
<dbReference type="PANTHER" id="PTHR11783">
    <property type="entry name" value="SULFOTRANSFERASE SULT"/>
    <property type="match status" value="1"/>
</dbReference>
<dbReference type="Pfam" id="PF00685">
    <property type="entry name" value="Sulfotransfer_1"/>
    <property type="match status" value="1"/>
</dbReference>
<dbReference type="SUPFAM" id="SSF52540">
    <property type="entry name" value="P-loop containing nucleoside triphosphate hydrolases"/>
    <property type="match status" value="1"/>
</dbReference>
<proteinExistence type="evidence at protein level"/>
<gene>
    <name evidence="7" type="primary">Sult2a2</name>
    <name evidence="7" type="synonym">Sta2</name>
    <name type="synonym">Sth2</name>
</gene>
<reference key="1">
    <citation type="journal article" date="1994" name="Chem. Biol. Interact.">
        <title>Molecular cloning of three sulfotransferase cDNAs from mouse liver.</title>
        <authorList>
            <person name="Kong A.-N.T."/>
            <person name="Fei P."/>
        </authorList>
    </citation>
    <scope>NUCLEOTIDE SEQUENCE [MRNA]</scope>
    <scope>FUNCTION</scope>
    <scope>CATALYTIC ACTIVITY</scope>
    <source>
        <strain>BALB/cJ</strain>
        <tissue>Liver</tissue>
    </source>
</reference>
<reference key="2">
    <citation type="journal article" date="2004" name="Genome Res.">
        <title>The status, quality, and expansion of the NIH full-length cDNA project: the Mammalian Gene Collection (MGC).</title>
        <authorList>
            <consortium name="The MGC Project Team"/>
        </authorList>
    </citation>
    <scope>NUCLEOTIDE SEQUENCE [LARGE SCALE MRNA]</scope>
    <source>
        <tissue>Brain</tissue>
    </source>
</reference>
<comment type="function">
    <text evidence="3">Sulfotransferase that utilizes 3'-phospho-5'-adenylyl sulfate (PAPS) as sulfonate donor to catalyze the sulfate conjugation of a potential wide variety of acceptor molecules bearing a hydroxyl group. Sulfonation increases the water solubility of most compounds, and therefore their renal excretion, but it can also result in bioactivation to form active metabolites.</text>
</comment>
<comment type="catalytic activity">
    <reaction evidence="3">
        <text>an alcohol + 3'-phosphoadenylyl sulfate = an alkyl sulfate + adenosine 3',5'-bisphosphate + H(+)</text>
        <dbReference type="Rhea" id="RHEA:22552"/>
        <dbReference type="ChEBI" id="CHEBI:15378"/>
        <dbReference type="ChEBI" id="CHEBI:30879"/>
        <dbReference type="ChEBI" id="CHEBI:58339"/>
        <dbReference type="ChEBI" id="CHEBI:58343"/>
        <dbReference type="ChEBI" id="CHEBI:83414"/>
        <dbReference type="EC" id="2.8.2.2"/>
    </reaction>
    <physiologicalReaction direction="left-to-right" evidence="6">
        <dbReference type="Rhea" id="RHEA:22553"/>
    </physiologicalReaction>
</comment>
<comment type="subcellular location">
    <subcellularLocation>
        <location evidence="1">Cytoplasm</location>
    </subcellularLocation>
</comment>
<comment type="similarity">
    <text evidence="5">Belongs to the sulfotransferase 1 family.</text>
</comment>
<evidence type="ECO:0000250" key="1">
    <source>
        <dbReference type="UniProtKB" id="P17988"/>
    </source>
</evidence>
<evidence type="ECO:0000250" key="2">
    <source>
        <dbReference type="UniProtKB" id="Q06520"/>
    </source>
</evidence>
<evidence type="ECO:0000269" key="3">
    <source>
    </source>
</evidence>
<evidence type="ECO:0000303" key="4">
    <source>
    </source>
</evidence>
<evidence type="ECO:0000305" key="5"/>
<evidence type="ECO:0000305" key="6">
    <source>
    </source>
</evidence>
<evidence type="ECO:0000312" key="7">
    <source>
        <dbReference type="MGI" id="MGI:107550"/>
    </source>
</evidence>
<protein>
    <recommendedName>
        <fullName evidence="6">Sulfotransferase 2A2</fullName>
        <shortName evidence="4">ST2A2</shortName>
        <ecNumber evidence="3">2.8.2.2</ecNumber>
    </recommendedName>
    <alternativeName>
        <fullName evidence="4">Hydroxysteroid sulfotransferase</fullName>
        <shortName evidence="4">ST</shortName>
    </alternativeName>
</protein>
<keyword id="KW-0963">Cytoplasm</keyword>
<keyword id="KW-0443">Lipid metabolism</keyword>
<keyword id="KW-1185">Reference proteome</keyword>
<keyword id="KW-0753">Steroid metabolism</keyword>
<keyword id="KW-0808">Transferase</keyword>